<organism>
    <name type="scientific">Mycobacterium bovis (strain BCG / Tokyo 172 / ATCC 35737 / TMC 1019)</name>
    <dbReference type="NCBI Taxonomy" id="561275"/>
    <lineage>
        <taxon>Bacteria</taxon>
        <taxon>Bacillati</taxon>
        <taxon>Actinomycetota</taxon>
        <taxon>Actinomycetes</taxon>
        <taxon>Mycobacteriales</taxon>
        <taxon>Mycobacteriaceae</taxon>
        <taxon>Mycobacterium</taxon>
        <taxon>Mycobacterium tuberculosis complex</taxon>
    </lineage>
</organism>
<accession>C1AQ82</accession>
<dbReference type="EMBL" id="AP010918">
    <property type="protein sequence ID" value="BAH26461.1"/>
    <property type="molecule type" value="Genomic_DNA"/>
</dbReference>
<dbReference type="RefSeq" id="WP_003411225.1">
    <property type="nucleotide sequence ID" value="NZ_CP014566.1"/>
</dbReference>
<dbReference type="SMR" id="C1AQ82"/>
<dbReference type="KEGG" id="mbt:JTY_2177"/>
<dbReference type="HOGENOM" id="CLU_107907_0_5_11"/>
<dbReference type="GO" id="GO:0005737">
    <property type="term" value="C:cytoplasm"/>
    <property type="evidence" value="ECO:0007669"/>
    <property type="project" value="UniProtKB-UniRule"/>
</dbReference>
<dbReference type="GO" id="GO:0009295">
    <property type="term" value="C:nucleoid"/>
    <property type="evidence" value="ECO:0007669"/>
    <property type="project" value="UniProtKB-SubCell"/>
</dbReference>
<dbReference type="GO" id="GO:0003700">
    <property type="term" value="F:DNA-binding transcription factor activity"/>
    <property type="evidence" value="ECO:0007669"/>
    <property type="project" value="UniProtKB-UniRule"/>
</dbReference>
<dbReference type="GO" id="GO:0000976">
    <property type="term" value="F:transcription cis-regulatory region binding"/>
    <property type="evidence" value="ECO:0007669"/>
    <property type="project" value="TreeGrafter"/>
</dbReference>
<dbReference type="GO" id="GO:2000143">
    <property type="term" value="P:negative regulation of DNA-templated transcription initiation"/>
    <property type="evidence" value="ECO:0007669"/>
    <property type="project" value="TreeGrafter"/>
</dbReference>
<dbReference type="CDD" id="cd16321">
    <property type="entry name" value="MraZ_C"/>
    <property type="match status" value="1"/>
</dbReference>
<dbReference type="CDD" id="cd16320">
    <property type="entry name" value="MraZ_N"/>
    <property type="match status" value="1"/>
</dbReference>
<dbReference type="FunFam" id="3.40.1550.20:FF:000004">
    <property type="entry name" value="Transcriptional regulator MraZ"/>
    <property type="match status" value="1"/>
</dbReference>
<dbReference type="Gene3D" id="3.40.1550.20">
    <property type="entry name" value="Transcriptional regulator MraZ domain"/>
    <property type="match status" value="1"/>
</dbReference>
<dbReference type="HAMAP" id="MF_01008">
    <property type="entry name" value="MraZ"/>
    <property type="match status" value="1"/>
</dbReference>
<dbReference type="InterPro" id="IPR003444">
    <property type="entry name" value="MraZ"/>
</dbReference>
<dbReference type="InterPro" id="IPR035644">
    <property type="entry name" value="MraZ_C"/>
</dbReference>
<dbReference type="InterPro" id="IPR020603">
    <property type="entry name" value="MraZ_dom"/>
</dbReference>
<dbReference type="InterPro" id="IPR035642">
    <property type="entry name" value="MraZ_N"/>
</dbReference>
<dbReference type="InterPro" id="IPR038619">
    <property type="entry name" value="MraZ_sf"/>
</dbReference>
<dbReference type="InterPro" id="IPR007159">
    <property type="entry name" value="SpoVT-AbrB_dom"/>
</dbReference>
<dbReference type="InterPro" id="IPR037914">
    <property type="entry name" value="SpoVT-AbrB_sf"/>
</dbReference>
<dbReference type="NCBIfam" id="TIGR00242">
    <property type="entry name" value="division/cell wall cluster transcriptional repressor MraZ"/>
    <property type="match status" value="1"/>
</dbReference>
<dbReference type="PANTHER" id="PTHR34701">
    <property type="entry name" value="TRANSCRIPTIONAL REGULATOR MRAZ"/>
    <property type="match status" value="1"/>
</dbReference>
<dbReference type="PANTHER" id="PTHR34701:SF1">
    <property type="entry name" value="TRANSCRIPTIONAL REGULATOR MRAZ"/>
    <property type="match status" value="1"/>
</dbReference>
<dbReference type="Pfam" id="PF02381">
    <property type="entry name" value="MraZ"/>
    <property type="match status" value="2"/>
</dbReference>
<dbReference type="SUPFAM" id="SSF89447">
    <property type="entry name" value="AbrB/MazE/MraZ-like"/>
    <property type="match status" value="1"/>
</dbReference>
<dbReference type="PROSITE" id="PS51740">
    <property type="entry name" value="SPOVT_ABRB"/>
    <property type="match status" value="2"/>
</dbReference>
<gene>
    <name evidence="1" type="primary">mraZ</name>
    <name type="ordered locus">JTY_2177</name>
</gene>
<keyword id="KW-0963">Cytoplasm</keyword>
<keyword id="KW-0238">DNA-binding</keyword>
<keyword id="KW-0677">Repeat</keyword>
<keyword id="KW-0804">Transcription</keyword>
<keyword id="KW-0805">Transcription regulation</keyword>
<sequence>MFLGTYTPKLDDKGRLTLPAKFRDALAGGLMVTKSQDHSLAVYPRAAFEQLARRASKAPRSNPEARAFLRNLAAGTDEQHPDSQGRITLSADHRRYASLSKDCVVIGAVDYLEIWDAQAWQNYQQIHEENFSAASDEALGDIF</sequence>
<reference key="1">
    <citation type="journal article" date="2009" name="Vaccine">
        <title>Whole genome sequence analysis of Mycobacterium bovis bacillus Calmette-Guerin (BCG) Tokyo 172: a comparative study of BCG vaccine substrains.</title>
        <authorList>
            <person name="Seki M."/>
            <person name="Honda I."/>
            <person name="Fujita I."/>
            <person name="Yano I."/>
            <person name="Yamamoto S."/>
            <person name="Koyama A."/>
        </authorList>
    </citation>
    <scope>NUCLEOTIDE SEQUENCE [LARGE SCALE GENOMIC DNA]</scope>
    <source>
        <strain>BCG / Tokyo 172 / ATCC 35737 / TMC 1019</strain>
    </source>
</reference>
<name>MRAZ_MYCBT</name>
<feature type="chain" id="PRO_1000148863" description="Transcriptional regulator MraZ">
    <location>
        <begin position="1"/>
        <end position="143"/>
    </location>
</feature>
<feature type="domain" description="SpoVT-AbrB 1" evidence="2">
    <location>
        <begin position="5"/>
        <end position="47"/>
    </location>
</feature>
<feature type="domain" description="SpoVT-AbrB 2" evidence="2">
    <location>
        <begin position="76"/>
        <end position="119"/>
    </location>
</feature>
<protein>
    <recommendedName>
        <fullName>Transcriptional regulator MraZ</fullName>
    </recommendedName>
</protein>
<proteinExistence type="inferred from homology"/>
<evidence type="ECO:0000255" key="1">
    <source>
        <dbReference type="HAMAP-Rule" id="MF_01008"/>
    </source>
</evidence>
<evidence type="ECO:0000255" key="2">
    <source>
        <dbReference type="PROSITE-ProRule" id="PRU01076"/>
    </source>
</evidence>
<comment type="subunit">
    <text evidence="1">Forms oligomers.</text>
</comment>
<comment type="subcellular location">
    <subcellularLocation>
        <location evidence="1">Cytoplasm</location>
        <location evidence="1">Nucleoid</location>
    </subcellularLocation>
</comment>
<comment type="similarity">
    <text evidence="1">Belongs to the MraZ family.</text>
</comment>